<sequence>MMPIRDGQPAPRGASYDGKGVNFSLFSQRAERVELCLYDDDGVETRLDLPAHSGDIWHGYLPAVRPGQRYGYRVHGPWQPQQGLRFNPAKLLLDPCARGIEGEVTDNPCFQSGEEQPDTLDSGPLAPKGVVLADDFDWEDDTWPRVPWGSTVIYEAHVRGLTQLHPGIPAEMRGTYAALGHPVMIDYFQRLGITSLQLLPVACFASEPRLLRLGLSNYWGYNPLACYALESRYACGQNPREEFQQAVKTLHQAGIEVILDVVFNHSAELDENGPTLSMRGIDNPTYYWLDGQGNYDNWTGCGNTQNLVHPEAVASTLDCLRYWVEECHIDGFRFDLATTLGRTPEYRRDAPLFQAIAADPLLAQCKIIAEPWDIGPRGYQVGNFPPPFAEWNDHFRDTARRYWLHGDFSNGDFARRFAASSDLFQKQGRLPSASLNYITAHDGFTLRDLVSFEHKHNEANGEDNRDGSNNNFSYNHGVEGLKAPLLVTEHRRRSIHALLTTLLLAQGTPMLLAGDEHGHSQHGNNNAYCQDNVLTWLDWKHGDRGLFSFTAALIHLRRRIPALQQDRWWQEGDGSVEWLNGQGRQLNRLEWEQGVHRLQIRLSKQWLITLNATEEVCDLVLPPGKWHAVPPFAGEDNPILLTVWHGAAQGVCVFQEKS</sequence>
<reference key="1">
    <citation type="journal article" date="2008" name="Environ. Microbiol.">
        <title>The genome of Erwinia tasmaniensis strain Et1/99, a non-pathogenic bacterium in the genus Erwinia.</title>
        <authorList>
            <person name="Kube M."/>
            <person name="Migdoll A.M."/>
            <person name="Mueller I."/>
            <person name="Kuhl H."/>
            <person name="Beck A."/>
            <person name="Reinhardt R."/>
            <person name="Geider K."/>
        </authorList>
    </citation>
    <scope>NUCLEOTIDE SEQUENCE [LARGE SCALE GENOMIC DNA]</scope>
    <source>
        <strain>DSM 17950 / CFBP 7177 / CIP 109463 / NCPPB 4357 / Et1/99</strain>
    </source>
</reference>
<protein>
    <recommendedName>
        <fullName evidence="1">Glycogen debranching enzyme</fullName>
        <ecNumber evidence="1">3.2.1.196</ecNumber>
    </recommendedName>
    <alternativeName>
        <fullName evidence="1">Limit dextrin alpha-1,6-maltotetraose-hydrolase</fullName>
    </alternativeName>
</protein>
<proteinExistence type="inferred from homology"/>
<dbReference type="EC" id="3.2.1.196" evidence="1"/>
<dbReference type="EMBL" id="CU468135">
    <property type="protein sequence ID" value="CAO98294.1"/>
    <property type="molecule type" value="Genomic_DNA"/>
</dbReference>
<dbReference type="RefSeq" id="WP_012442921.1">
    <property type="nucleotide sequence ID" value="NC_010694.1"/>
</dbReference>
<dbReference type="SMR" id="B2VJR7"/>
<dbReference type="STRING" id="465817.ETA_32480"/>
<dbReference type="CAZy" id="CBM48">
    <property type="family name" value="Carbohydrate-Binding Module Family 48"/>
</dbReference>
<dbReference type="CAZy" id="GH13">
    <property type="family name" value="Glycoside Hydrolase Family 13"/>
</dbReference>
<dbReference type="KEGG" id="eta:ETA_32480"/>
<dbReference type="eggNOG" id="COG1523">
    <property type="taxonomic scope" value="Bacteria"/>
</dbReference>
<dbReference type="HOGENOM" id="CLU_011725_1_1_6"/>
<dbReference type="OrthoDB" id="3236218at2"/>
<dbReference type="UniPathway" id="UPA00165"/>
<dbReference type="Proteomes" id="UP000001726">
    <property type="component" value="Chromosome"/>
</dbReference>
<dbReference type="GO" id="GO:0004133">
    <property type="term" value="F:glycogen debranching enzyme activity"/>
    <property type="evidence" value="ECO:0007669"/>
    <property type="project" value="UniProtKB-UniRule"/>
</dbReference>
<dbReference type="GO" id="GO:0004553">
    <property type="term" value="F:hydrolase activity, hydrolyzing O-glycosyl compounds"/>
    <property type="evidence" value="ECO:0007669"/>
    <property type="project" value="InterPro"/>
</dbReference>
<dbReference type="GO" id="GO:0005980">
    <property type="term" value="P:glycogen catabolic process"/>
    <property type="evidence" value="ECO:0007669"/>
    <property type="project" value="UniProtKB-UniRule"/>
</dbReference>
<dbReference type="CDD" id="cd11326">
    <property type="entry name" value="AmyAc_Glg_debranch"/>
    <property type="match status" value="1"/>
</dbReference>
<dbReference type="CDD" id="cd02856">
    <property type="entry name" value="E_set_GDE_Isoamylase_N"/>
    <property type="match status" value="1"/>
</dbReference>
<dbReference type="Gene3D" id="3.20.20.80">
    <property type="entry name" value="Glycosidases"/>
    <property type="match status" value="1"/>
</dbReference>
<dbReference type="Gene3D" id="2.60.40.1180">
    <property type="entry name" value="Golgi alpha-mannosidase II"/>
    <property type="match status" value="1"/>
</dbReference>
<dbReference type="Gene3D" id="2.60.40.10">
    <property type="entry name" value="Immunoglobulins"/>
    <property type="match status" value="1"/>
</dbReference>
<dbReference type="HAMAP" id="MF_01248">
    <property type="entry name" value="GlgX"/>
    <property type="match status" value="1"/>
</dbReference>
<dbReference type="InterPro" id="IPR040784">
    <property type="entry name" value="GlgX_C"/>
</dbReference>
<dbReference type="InterPro" id="IPR044505">
    <property type="entry name" value="GlgX_Isoamylase_N_E_set"/>
</dbReference>
<dbReference type="InterPro" id="IPR006047">
    <property type="entry name" value="Glyco_hydro_13_cat_dom"/>
</dbReference>
<dbReference type="InterPro" id="IPR004193">
    <property type="entry name" value="Glyco_hydro_13_N"/>
</dbReference>
<dbReference type="InterPro" id="IPR013780">
    <property type="entry name" value="Glyco_hydro_b"/>
</dbReference>
<dbReference type="InterPro" id="IPR022844">
    <property type="entry name" value="Glycogen_debranch_bac"/>
</dbReference>
<dbReference type="InterPro" id="IPR011837">
    <property type="entry name" value="Glycogen_debranch_GlgX"/>
</dbReference>
<dbReference type="InterPro" id="IPR017853">
    <property type="entry name" value="Glycoside_hydrolase_SF"/>
</dbReference>
<dbReference type="InterPro" id="IPR013783">
    <property type="entry name" value="Ig-like_fold"/>
</dbReference>
<dbReference type="InterPro" id="IPR014756">
    <property type="entry name" value="Ig_E-set"/>
</dbReference>
<dbReference type="NCBIfam" id="TIGR02100">
    <property type="entry name" value="glgX_debranch"/>
    <property type="match status" value="1"/>
</dbReference>
<dbReference type="NCBIfam" id="NF002983">
    <property type="entry name" value="PRK03705.1"/>
    <property type="match status" value="1"/>
</dbReference>
<dbReference type="PANTHER" id="PTHR43002">
    <property type="entry name" value="GLYCOGEN DEBRANCHING ENZYME"/>
    <property type="match status" value="1"/>
</dbReference>
<dbReference type="Pfam" id="PF00128">
    <property type="entry name" value="Alpha-amylase"/>
    <property type="match status" value="2"/>
</dbReference>
<dbReference type="Pfam" id="PF02922">
    <property type="entry name" value="CBM_48"/>
    <property type="match status" value="1"/>
</dbReference>
<dbReference type="Pfam" id="PF18390">
    <property type="entry name" value="GlgX_C"/>
    <property type="match status" value="1"/>
</dbReference>
<dbReference type="SMART" id="SM00642">
    <property type="entry name" value="Aamy"/>
    <property type="match status" value="1"/>
</dbReference>
<dbReference type="SUPFAM" id="SSF51445">
    <property type="entry name" value="(Trans)glycosidases"/>
    <property type="match status" value="1"/>
</dbReference>
<dbReference type="SUPFAM" id="SSF81296">
    <property type="entry name" value="E set domains"/>
    <property type="match status" value="1"/>
</dbReference>
<keyword id="KW-0119">Carbohydrate metabolism</keyword>
<keyword id="KW-0321">Glycogen metabolism</keyword>
<keyword id="KW-0326">Glycosidase</keyword>
<keyword id="KW-0378">Hydrolase</keyword>
<keyword id="KW-1185">Reference proteome</keyword>
<feature type="chain" id="PRO_1000165060" description="Glycogen debranching enzyme">
    <location>
        <begin position="1"/>
        <end position="658"/>
    </location>
</feature>
<feature type="active site" description="Nucleophile" evidence="1">
    <location>
        <position position="335"/>
    </location>
</feature>
<feature type="active site" description="Proton donor" evidence="1">
    <location>
        <position position="370"/>
    </location>
</feature>
<feature type="site" description="Transition state stabilizer" evidence="1">
    <location>
        <position position="442"/>
    </location>
</feature>
<evidence type="ECO:0000255" key="1">
    <source>
        <dbReference type="HAMAP-Rule" id="MF_01248"/>
    </source>
</evidence>
<evidence type="ECO:0000305" key="2"/>
<organism>
    <name type="scientific">Erwinia tasmaniensis (strain DSM 17950 / CFBP 7177 / CIP 109463 / NCPPB 4357 / Et1/99)</name>
    <dbReference type="NCBI Taxonomy" id="465817"/>
    <lineage>
        <taxon>Bacteria</taxon>
        <taxon>Pseudomonadati</taxon>
        <taxon>Pseudomonadota</taxon>
        <taxon>Gammaproteobacteria</taxon>
        <taxon>Enterobacterales</taxon>
        <taxon>Erwiniaceae</taxon>
        <taxon>Erwinia</taxon>
    </lineage>
</organism>
<accession>B2VJR7</accession>
<gene>
    <name evidence="1" type="primary">glgX</name>
    <name type="ordered locus">ETA_32480</name>
</gene>
<comment type="function">
    <text evidence="1">Removes maltotriose and maltotetraose chains that are attached by 1,6-alpha-linkage to the limit dextrin main chain, generating a debranched limit dextrin.</text>
</comment>
<comment type="catalytic activity">
    <reaction evidence="1">
        <text>Hydrolysis of (1-&gt;6)-alpha-D-glucosidic linkages to branches with degrees of polymerization of three or four glucose residues in limit dextrin.</text>
        <dbReference type="EC" id="3.2.1.196"/>
    </reaction>
</comment>
<comment type="pathway">
    <text evidence="1">Glycan degradation; glycogen degradation.</text>
</comment>
<comment type="similarity">
    <text evidence="1 2">Belongs to the glycosyl hydrolase 13 family.</text>
</comment>
<name>GLGX_ERWT9</name>